<keyword id="KW-0024">Alternative initiation</keyword>
<keyword id="KW-0877">Alternative promoter usage</keyword>
<keyword id="KW-1185">Reference proteome</keyword>
<protein>
    <recommendedName>
        <fullName>Uncharacterized protein VP3</fullName>
    </recommendedName>
</protein>
<accession>Q672I0</accession>
<gene>
    <name type="ORF">ORF3</name>
</gene>
<dbReference type="EMBL" id="AY694184">
    <property type="protein sequence ID" value="AAU09266.1"/>
    <property type="molecule type" value="Genomic_RNA"/>
</dbReference>
<dbReference type="RefSeq" id="YP_077279.1">
    <molecule id="Q672I0-1"/>
    <property type="nucleotide sequence ID" value="NC_006269.1"/>
</dbReference>
<dbReference type="KEGG" id="vg:5176814"/>
<dbReference type="Proteomes" id="UP000007049">
    <property type="component" value="Genome"/>
</dbReference>
<dbReference type="InterPro" id="IPR009949">
    <property type="entry name" value="Sapovirus_VP3"/>
</dbReference>
<dbReference type="Pfam" id="PF07349">
    <property type="entry name" value="DUF1478"/>
    <property type="match status" value="1"/>
</dbReference>
<comment type="alternative products">
    <event type="alternative promoter"/>
    <event type="alternative initiation"/>
    <isoform>
        <id>Q672I0-1</id>
        <name>Uncharacterized protein VP3</name>
        <sequence type="displayed"/>
    </isoform>
    <isoform>
        <id>Q672I1-2</id>
        <name>Subgenomic capsid protein</name>
        <name>VP1</name>
        <sequence type="external"/>
    </isoform>
    <isoform>
        <id>Q672I1-1</id>
        <name>Genome polyprotein</name>
        <sequence type="external"/>
    </isoform>
</comment>
<comment type="miscellaneous">
    <molecule>Isoform Uncharacterized protein VP3</molecule>
    <text>Produced by alternative initiation from the subgenomic RNA.</text>
</comment>
<comment type="similarity">
    <text evidence="1">Belongs to the sapovirus VP3 family.</text>
</comment>
<proteinExistence type="inferred from homology"/>
<feature type="chain" id="PRO_0000342116" description="Uncharacterized protein VP3">
    <location>
        <begin position="1"/>
        <end position="161"/>
    </location>
</feature>
<organism>
    <name type="scientific">Sapporo virus (isolate GI/Human/Germany/pJG-Sap01)</name>
    <name type="common">Hu/Dresden/pJG-Sap01/DE</name>
    <dbReference type="NCBI Taxonomy" id="291175"/>
    <lineage>
        <taxon>Viruses</taxon>
        <taxon>Riboviria</taxon>
        <taxon>Orthornavirae</taxon>
        <taxon>Pisuviricota</taxon>
        <taxon>Pisoniviricetes</taxon>
        <taxon>Picornavirales</taxon>
        <taxon>Caliciviridae</taxon>
        <taxon>Sapovirus</taxon>
        <taxon>Sapporo virus</taxon>
    </lineage>
</organism>
<reference key="1">
    <citation type="journal article" date="2007" name="J. Virol.">
        <title>Structural and functional characterization of sapovirus RNA-dependent RNA polymerase.</title>
        <authorList>
            <person name="Fullerton S.W."/>
            <person name="Blaschke M."/>
            <person name="Coutard B."/>
            <person name="Gebhardt J."/>
            <person name="Gorbalenya A."/>
            <person name="Canard B."/>
            <person name="Tucker P.A."/>
            <person name="Rohayem J."/>
        </authorList>
    </citation>
    <scope>NUCLEOTIDE SEQUENCE [GENOMIC RNA]</scope>
</reference>
<organismHost>
    <name type="scientific">Homo sapiens</name>
    <name type="common">Human</name>
    <dbReference type="NCBI Taxonomy" id="9606"/>
</organismHost>
<sequence length="161" mass="17553">MAPTQSQSRATTRWSLTRLAQQVRPHPTLLLLIRSNPMGPHSAWSWLLPLVQSNPMSLRQYATALQSFVLLLGTTGCPRELFLDLYRFIPTLTRTLLTSLGCGPGGAVVLRSGYRSLVLACSLGVSLLLSYHQGLIPRPSGTQACCLTLSLMLASLSQFLS</sequence>
<evidence type="ECO:0000305" key="1"/>
<name>VP3_SVSAP</name>